<keyword id="KW-0002">3D-structure</keyword>
<keyword id="KW-0945">Host-virus interaction</keyword>
<keyword id="KW-1017">Isopeptide bond</keyword>
<keyword id="KW-0539">Nucleus</keyword>
<keyword id="KW-0597">Phosphoprotein</keyword>
<keyword id="KW-1267">Proteomics identification</keyword>
<keyword id="KW-0675">Receptor</keyword>
<keyword id="KW-1185">Reference proteome</keyword>
<keyword id="KW-0832">Ubl conjugation</keyword>
<keyword id="KW-0833">Ubl conjugation pathway</keyword>
<accession>Q93034</accession>
<accession>A8K960</accession>
<accession>O14766</accession>
<accession>Q9BZC6</accession>
<organism>
    <name type="scientific">Homo sapiens</name>
    <name type="common">Human</name>
    <dbReference type="NCBI Taxonomy" id="9606"/>
    <lineage>
        <taxon>Eukaryota</taxon>
        <taxon>Metazoa</taxon>
        <taxon>Chordata</taxon>
        <taxon>Craniata</taxon>
        <taxon>Vertebrata</taxon>
        <taxon>Euteleostomi</taxon>
        <taxon>Mammalia</taxon>
        <taxon>Eutheria</taxon>
        <taxon>Euarchontoglires</taxon>
        <taxon>Primates</taxon>
        <taxon>Haplorrhini</taxon>
        <taxon>Catarrhini</taxon>
        <taxon>Hominidae</taxon>
        <taxon>Homo</taxon>
    </lineage>
</organism>
<protein>
    <recommendedName>
        <fullName evidence="47">Cullin-5</fullName>
        <shortName evidence="47">CUL-5</shortName>
    </recommendedName>
    <alternativeName>
        <fullName evidence="46">Vasopressin-activated calcium-mobilizing receptor 1</fullName>
        <shortName evidence="46">VACM-1</shortName>
    </alternativeName>
</protein>
<dbReference type="EMBL" id="X81882">
    <property type="protein sequence ID" value="CAA57465.1"/>
    <property type="molecule type" value="mRNA"/>
</dbReference>
<dbReference type="EMBL" id="AF017061">
    <property type="protein sequence ID" value="AAB70253.1"/>
    <property type="molecule type" value="mRNA"/>
</dbReference>
<dbReference type="EMBL" id="AF327710">
    <property type="protein sequence ID" value="AAK07472.1"/>
    <property type="molecule type" value="mRNA"/>
</dbReference>
<dbReference type="EMBL" id="AK292575">
    <property type="protein sequence ID" value="BAF85264.1"/>
    <property type="molecule type" value="mRNA"/>
</dbReference>
<dbReference type="EMBL" id="CH471065">
    <property type="protein sequence ID" value="EAW67102.1"/>
    <property type="molecule type" value="Genomic_DNA"/>
</dbReference>
<dbReference type="EMBL" id="BC063306">
    <property type="protein sequence ID" value="AAH63306.1"/>
    <property type="molecule type" value="mRNA"/>
</dbReference>
<dbReference type="CCDS" id="CCDS31668.1"/>
<dbReference type="RefSeq" id="NP_003469.2">
    <property type="nucleotide sequence ID" value="NM_003478.4"/>
</dbReference>
<dbReference type="PDB" id="3DPL">
    <property type="method" value="X-ray"/>
    <property type="resolution" value="2.60 A"/>
    <property type="chains" value="C=401-780"/>
</dbReference>
<dbReference type="PDB" id="3DQV">
    <property type="method" value="X-ray"/>
    <property type="resolution" value="3.00 A"/>
    <property type="chains" value="C/D=401-780"/>
</dbReference>
<dbReference type="PDB" id="4JGH">
    <property type="method" value="X-ray"/>
    <property type="resolution" value="3.00 A"/>
    <property type="chains" value="D=10-386"/>
</dbReference>
<dbReference type="PDB" id="4N9F">
    <property type="method" value="X-ray"/>
    <property type="resolution" value="3.30 A"/>
    <property type="chains" value="3/9/C/I/O/U/V/f/l/r/w/x=12-321"/>
</dbReference>
<dbReference type="PDB" id="6V9I">
    <property type="method" value="EM"/>
    <property type="resolution" value="5.20 A"/>
    <property type="chains" value="C=2-780"/>
</dbReference>
<dbReference type="PDB" id="7ONI">
    <property type="method" value="EM"/>
    <property type="resolution" value="3.40 A"/>
    <property type="chains" value="C=1-780"/>
</dbReference>
<dbReference type="PDB" id="8EI2">
    <property type="method" value="X-ray"/>
    <property type="resolution" value="2.80 A"/>
    <property type="chains" value="A=1-386"/>
</dbReference>
<dbReference type="PDB" id="8FVI">
    <property type="method" value="EM"/>
    <property type="resolution" value="3.24 A"/>
    <property type="chains" value="x=11-320"/>
</dbReference>
<dbReference type="PDB" id="8FVJ">
    <property type="method" value="EM"/>
    <property type="resolution" value="3.54 A"/>
    <property type="chains" value="2/7=12-320"/>
</dbReference>
<dbReference type="PDBsum" id="3DPL"/>
<dbReference type="PDBsum" id="3DQV"/>
<dbReference type="PDBsum" id="4JGH"/>
<dbReference type="PDBsum" id="4N9F"/>
<dbReference type="PDBsum" id="6V9I"/>
<dbReference type="PDBsum" id="7ONI"/>
<dbReference type="PDBsum" id="8EI2"/>
<dbReference type="PDBsum" id="8FVI"/>
<dbReference type="PDBsum" id="8FVJ"/>
<dbReference type="EMDB" id="EMD-12995"/>
<dbReference type="EMDB" id="EMD-21121"/>
<dbReference type="EMDB" id="EMD-27885"/>
<dbReference type="EMDB" id="EMD-29489"/>
<dbReference type="EMDB" id="EMD-29490"/>
<dbReference type="SMR" id="Q93034"/>
<dbReference type="BioGRID" id="113743">
    <property type="interactions" value="570"/>
</dbReference>
<dbReference type="CORUM" id="Q93034"/>
<dbReference type="DIP" id="DIP-43696N"/>
<dbReference type="FunCoup" id="Q93034">
    <property type="interactions" value="1453"/>
</dbReference>
<dbReference type="IntAct" id="Q93034">
    <property type="interactions" value="377"/>
</dbReference>
<dbReference type="MINT" id="Q93034"/>
<dbReference type="STRING" id="9606.ENSP00000376808"/>
<dbReference type="ChEMBL" id="CHEMBL5291609"/>
<dbReference type="GlyGen" id="Q93034">
    <property type="glycosylation" value="1 site, 2 O-linked glycans (1 site)"/>
</dbReference>
<dbReference type="iPTMnet" id="Q93034"/>
<dbReference type="PhosphoSitePlus" id="Q93034"/>
<dbReference type="SwissPalm" id="Q93034"/>
<dbReference type="BioMuta" id="CUL5"/>
<dbReference type="DMDM" id="14917099"/>
<dbReference type="jPOST" id="Q93034"/>
<dbReference type="MassIVE" id="Q93034"/>
<dbReference type="PaxDb" id="9606-ENSP00000376808"/>
<dbReference type="PeptideAtlas" id="Q93034"/>
<dbReference type="ProteomicsDB" id="75673"/>
<dbReference type="Pumba" id="Q93034"/>
<dbReference type="Antibodypedia" id="990">
    <property type="antibodies" value="229 antibodies from 36 providers"/>
</dbReference>
<dbReference type="DNASU" id="8065"/>
<dbReference type="Ensembl" id="ENST00000393094.7">
    <property type="protein sequence ID" value="ENSP00000376808.2"/>
    <property type="gene ID" value="ENSG00000166266.14"/>
</dbReference>
<dbReference type="Ensembl" id="ENST00000531427.5">
    <property type="protein sequence ID" value="ENSP00000435376.1"/>
    <property type="gene ID" value="ENSG00000166266.14"/>
</dbReference>
<dbReference type="GeneID" id="8065"/>
<dbReference type="KEGG" id="hsa:8065"/>
<dbReference type="MANE-Select" id="ENST00000393094.7">
    <property type="protein sequence ID" value="ENSP00000376808.2"/>
    <property type="RefSeq nucleotide sequence ID" value="NM_003478.6"/>
    <property type="RefSeq protein sequence ID" value="NP_003469.2"/>
</dbReference>
<dbReference type="UCSC" id="uc001pjv.4">
    <property type="organism name" value="human"/>
</dbReference>
<dbReference type="AGR" id="HGNC:2556"/>
<dbReference type="CTD" id="8065"/>
<dbReference type="DisGeNET" id="8065"/>
<dbReference type="GeneCards" id="CUL5"/>
<dbReference type="HGNC" id="HGNC:2556">
    <property type="gene designation" value="CUL5"/>
</dbReference>
<dbReference type="HPA" id="ENSG00000166266">
    <property type="expression patterns" value="Low tissue specificity"/>
</dbReference>
<dbReference type="MalaCards" id="CUL5"/>
<dbReference type="MIM" id="601741">
    <property type="type" value="gene"/>
</dbReference>
<dbReference type="neXtProt" id="NX_Q93034"/>
<dbReference type="OpenTargets" id="ENSG00000166266"/>
<dbReference type="PharmGKB" id="PA27052"/>
<dbReference type="VEuPathDB" id="HostDB:ENSG00000166266"/>
<dbReference type="eggNOG" id="KOG2285">
    <property type="taxonomic scope" value="Eukaryota"/>
</dbReference>
<dbReference type="GeneTree" id="ENSGT00940000156648"/>
<dbReference type="HOGENOM" id="CLU_004747_5_0_1"/>
<dbReference type="InParanoid" id="Q93034"/>
<dbReference type="OMA" id="FWINQQF"/>
<dbReference type="OrthoDB" id="27073at2759"/>
<dbReference type="PAN-GO" id="Q93034">
    <property type="GO annotations" value="6 GO annotations based on evolutionary models"/>
</dbReference>
<dbReference type="PhylomeDB" id="Q93034"/>
<dbReference type="TreeFam" id="TF105874"/>
<dbReference type="PathwayCommons" id="Q93034"/>
<dbReference type="Reactome" id="R-HSA-180585">
    <property type="pathway name" value="Vif-mediated degradation of APOBEC3G"/>
</dbReference>
<dbReference type="Reactome" id="R-HSA-8863795">
    <property type="pathway name" value="Downregulation of ERBB2 signaling"/>
</dbReference>
<dbReference type="Reactome" id="R-HSA-8951664">
    <property type="pathway name" value="Neddylation"/>
</dbReference>
<dbReference type="Reactome" id="R-HSA-9705462">
    <property type="pathway name" value="Inactivation of CSF3 (G-CSF) signaling"/>
</dbReference>
<dbReference type="Reactome" id="R-HSA-983168">
    <property type="pathway name" value="Antigen processing: Ubiquitination &amp; Proteasome degradation"/>
</dbReference>
<dbReference type="Reactome" id="R-HSA-9833109">
    <property type="pathway name" value="Evasion by RSV of host interferon responses"/>
</dbReference>
<dbReference type="SignaLink" id="Q93034"/>
<dbReference type="SIGNOR" id="Q93034"/>
<dbReference type="UniPathway" id="UPA00143"/>
<dbReference type="BioGRID-ORCS" id="8065">
    <property type="hits" value="48 hits in 1213 CRISPR screens"/>
</dbReference>
<dbReference type="ChiTaRS" id="CUL5">
    <property type="organism name" value="human"/>
</dbReference>
<dbReference type="EvolutionaryTrace" id="Q93034"/>
<dbReference type="GeneWiki" id="CUL5"/>
<dbReference type="GenomeRNAi" id="8065"/>
<dbReference type="Pharos" id="Q93034">
    <property type="development level" value="Tbio"/>
</dbReference>
<dbReference type="PRO" id="PR:Q93034"/>
<dbReference type="Proteomes" id="UP000005640">
    <property type="component" value="Chromosome 11"/>
</dbReference>
<dbReference type="RNAct" id="Q93034">
    <property type="molecule type" value="protein"/>
</dbReference>
<dbReference type="Bgee" id="ENSG00000166266">
    <property type="expression patterns" value="Expressed in secondary oocyte and 221 other cell types or tissues"/>
</dbReference>
<dbReference type="ExpressionAtlas" id="Q93034">
    <property type="expression patterns" value="baseline and differential"/>
</dbReference>
<dbReference type="GO" id="GO:0031466">
    <property type="term" value="C:Cul5-RING ubiquitin ligase complex"/>
    <property type="evidence" value="ECO:0000314"/>
    <property type="project" value="UniProtKB"/>
</dbReference>
<dbReference type="GO" id="GO:0005829">
    <property type="term" value="C:cytosol"/>
    <property type="evidence" value="ECO:0000304"/>
    <property type="project" value="Reactome"/>
</dbReference>
<dbReference type="GO" id="GO:0005634">
    <property type="term" value="C:nucleus"/>
    <property type="evidence" value="ECO:0000314"/>
    <property type="project" value="UniProtKB"/>
</dbReference>
<dbReference type="GO" id="GO:0019005">
    <property type="term" value="C:SCF ubiquitin ligase complex"/>
    <property type="evidence" value="ECO:0000318"/>
    <property type="project" value="GO_Central"/>
</dbReference>
<dbReference type="GO" id="GO:0090734">
    <property type="term" value="C:site of DNA damage"/>
    <property type="evidence" value="ECO:0000314"/>
    <property type="project" value="UniProtKB"/>
</dbReference>
<dbReference type="GO" id="GO:0005262">
    <property type="term" value="F:calcium channel activity"/>
    <property type="evidence" value="ECO:0000304"/>
    <property type="project" value="ProtInc"/>
</dbReference>
<dbReference type="GO" id="GO:0030674">
    <property type="term" value="F:protein-macromolecule adaptor activity"/>
    <property type="evidence" value="ECO:0000318"/>
    <property type="project" value="GO_Central"/>
</dbReference>
<dbReference type="GO" id="GO:0038023">
    <property type="term" value="F:signaling receptor activity"/>
    <property type="evidence" value="ECO:0000304"/>
    <property type="project" value="ProtInc"/>
</dbReference>
<dbReference type="GO" id="GO:0160072">
    <property type="term" value="F:ubiquitin ligase complex scaffold activity"/>
    <property type="evidence" value="ECO:0000314"/>
    <property type="project" value="UniProtKB"/>
</dbReference>
<dbReference type="GO" id="GO:0031625">
    <property type="term" value="F:ubiquitin protein ligase binding"/>
    <property type="evidence" value="ECO:0000314"/>
    <property type="project" value="UniProtKB"/>
</dbReference>
<dbReference type="GO" id="GO:0004842">
    <property type="term" value="F:ubiquitin-protein transferase activity"/>
    <property type="evidence" value="ECO:0000304"/>
    <property type="project" value="Reactome"/>
</dbReference>
<dbReference type="GO" id="GO:0038128">
    <property type="term" value="P:ERBB2 signaling pathway"/>
    <property type="evidence" value="ECO:0000304"/>
    <property type="project" value="Reactome"/>
</dbReference>
<dbReference type="GO" id="GO:0000082">
    <property type="term" value="P:G1/S transition of mitotic cell cycle"/>
    <property type="evidence" value="ECO:0000304"/>
    <property type="project" value="ProtInc"/>
</dbReference>
<dbReference type="GO" id="GO:0097193">
    <property type="term" value="P:intrinsic apoptotic signaling pathway"/>
    <property type="evidence" value="ECO:0000304"/>
    <property type="project" value="ProtInc"/>
</dbReference>
<dbReference type="GO" id="GO:0043161">
    <property type="term" value="P:proteasome-mediated ubiquitin-dependent protein catabolic process"/>
    <property type="evidence" value="ECO:0000314"/>
    <property type="project" value="UniProt"/>
</dbReference>
<dbReference type="GO" id="GO:0070979">
    <property type="term" value="P:protein K11-linked ubiquitination"/>
    <property type="evidence" value="ECO:0000314"/>
    <property type="project" value="UniProtKB"/>
</dbReference>
<dbReference type="GO" id="GO:0016567">
    <property type="term" value="P:protein ubiquitination"/>
    <property type="evidence" value="ECO:0000318"/>
    <property type="project" value="GO_Central"/>
</dbReference>
<dbReference type="GO" id="GO:0038026">
    <property type="term" value="P:reelin-mediated signaling pathway"/>
    <property type="evidence" value="ECO:0000250"/>
    <property type="project" value="UniProtKB"/>
</dbReference>
<dbReference type="GO" id="GO:2001222">
    <property type="term" value="P:regulation of neuron migration"/>
    <property type="evidence" value="ECO:0000250"/>
    <property type="project" value="UniProtKB"/>
</dbReference>
<dbReference type="GO" id="GO:0031146">
    <property type="term" value="P:SCF-dependent proteasomal ubiquitin-dependent protein catabolic process"/>
    <property type="evidence" value="ECO:0000318"/>
    <property type="project" value="GO_Central"/>
</dbReference>
<dbReference type="FunFam" id="1.10.10.10:FF:000142">
    <property type="entry name" value="Cullin 5"/>
    <property type="match status" value="1"/>
</dbReference>
<dbReference type="FunFam" id="1.20.1310.10:FF:000009">
    <property type="entry name" value="Cullin 5"/>
    <property type="match status" value="1"/>
</dbReference>
<dbReference type="FunFam" id="1.20.1310.10:FF:000014">
    <property type="entry name" value="Cullin 5"/>
    <property type="match status" value="1"/>
</dbReference>
<dbReference type="FunFam" id="1.20.1310.10:FF:000017">
    <property type="entry name" value="Cullin 5"/>
    <property type="match status" value="1"/>
</dbReference>
<dbReference type="FunFam" id="3.30.230.130:FF:000004">
    <property type="entry name" value="Cullin 5"/>
    <property type="match status" value="1"/>
</dbReference>
<dbReference type="Gene3D" id="1.20.1310.10">
    <property type="entry name" value="Cullin Repeats"/>
    <property type="match status" value="4"/>
</dbReference>
<dbReference type="Gene3D" id="3.30.230.130">
    <property type="entry name" value="Cullin, Chain C, Domain 2"/>
    <property type="match status" value="1"/>
</dbReference>
<dbReference type="Gene3D" id="1.10.10.10">
    <property type="entry name" value="Winged helix-like DNA-binding domain superfamily/Winged helix DNA-binding domain"/>
    <property type="match status" value="1"/>
</dbReference>
<dbReference type="IDEAL" id="IID00519"/>
<dbReference type="InterPro" id="IPR045093">
    <property type="entry name" value="Cullin"/>
</dbReference>
<dbReference type="InterPro" id="IPR016157">
    <property type="entry name" value="Cullin_CS"/>
</dbReference>
<dbReference type="InterPro" id="IPR016158">
    <property type="entry name" value="Cullin_homology"/>
</dbReference>
<dbReference type="InterPro" id="IPR036317">
    <property type="entry name" value="Cullin_homology_sf"/>
</dbReference>
<dbReference type="InterPro" id="IPR001373">
    <property type="entry name" value="Cullin_N"/>
</dbReference>
<dbReference type="InterPro" id="IPR019559">
    <property type="entry name" value="Cullin_neddylation_domain"/>
</dbReference>
<dbReference type="InterPro" id="IPR016159">
    <property type="entry name" value="Cullin_repeat-like_dom_sf"/>
</dbReference>
<dbReference type="InterPro" id="IPR036388">
    <property type="entry name" value="WH-like_DNA-bd_sf"/>
</dbReference>
<dbReference type="InterPro" id="IPR036390">
    <property type="entry name" value="WH_DNA-bd_sf"/>
</dbReference>
<dbReference type="PANTHER" id="PTHR11932">
    <property type="entry name" value="CULLIN"/>
    <property type="match status" value="1"/>
</dbReference>
<dbReference type="Pfam" id="PF00888">
    <property type="entry name" value="Cullin"/>
    <property type="match status" value="1"/>
</dbReference>
<dbReference type="Pfam" id="PF10557">
    <property type="entry name" value="Cullin_Nedd8"/>
    <property type="match status" value="1"/>
</dbReference>
<dbReference type="SMART" id="SM00182">
    <property type="entry name" value="CULLIN"/>
    <property type="match status" value="1"/>
</dbReference>
<dbReference type="SMART" id="SM00884">
    <property type="entry name" value="Cullin_Nedd8"/>
    <property type="match status" value="1"/>
</dbReference>
<dbReference type="SUPFAM" id="SSF75632">
    <property type="entry name" value="Cullin homology domain"/>
    <property type="match status" value="1"/>
</dbReference>
<dbReference type="SUPFAM" id="SSF74788">
    <property type="entry name" value="Cullin repeat-like"/>
    <property type="match status" value="1"/>
</dbReference>
<dbReference type="SUPFAM" id="SSF46785">
    <property type="entry name" value="Winged helix' DNA-binding domain"/>
    <property type="match status" value="1"/>
</dbReference>
<dbReference type="PROSITE" id="PS01256">
    <property type="entry name" value="CULLIN_1"/>
    <property type="match status" value="1"/>
</dbReference>
<dbReference type="PROSITE" id="PS50069">
    <property type="entry name" value="CULLIN_2"/>
    <property type="match status" value="1"/>
</dbReference>
<sequence length="780" mass="90955">MATSNLLKNKGSLQFEDKWDFMRPIVLKLLRQESVTKQQWFDLFSDVHAVCLWDDKGPAKIHQALKEDILEFIKQAQARVLSHQDDTALLKAYIVEWRKFFTQCDILPKPFCQLEITLMGKQGSNKKSNVEDSIVRKLMLDTWNESIFSNIKNRLQDSAMKLVHAERLGEAFDSQLVIGVRESYVNLCSNPEDKLQIYRDNFEKAYLDSTERFYRTQAPSYLQQNGVQNYMKYADAKLKEEEKRALRYLETRRECNSVEALMECCVNALVTSFKETILAECQGMIKRNETEKLHLMFSLMDKVPNGIEPMLKDLEEHIISAGLADMVAAAETITTDSEKYVEQLLTLFNRFSKLVKEAFQDDPRFLTARDKAYKAVVNDATIFKLELPLKQKGVGLKTQPESKCPELLANYCDMLLRKTPLSKKLTSEEIEAKLKEVLLVLKYVQNKDVFMRYHKAHLTRRLILDISADSEIEENMVEWLREVGMPADYVNKLARMFQDIKVSEDLNQAFKEMHKNNKLALPADSVNIKILNAGAWSRSSEKVFVSLPTELEDLIPEVEEFYKKNHSGRKLHWHHLMSNGIITFKNEVGQYDLEVTTFQLAVLFAWNQRPREKISFENLKLATELPDAELRRTLWSLVAFPKLKRQVLLYEPQVNSPKDFTEGTLFSVNQEFSLIKNAKVQKRGKINLIGRLQLTTERMREEENEGIVQLRILRTQEAIIQIMKMRKKISNAQLQTELVEILKNMFLPQKKMIKEQIEWLIEHKYIRRDESDINTFIYMA</sequence>
<reference key="1">
    <citation type="journal article" date="1997" name="Genome Res.">
        <title>Identification and analysis of expression of human VACM-1, a cullin gene family member located on chromosome 11q22-23.</title>
        <authorList>
            <person name="Byrd P.J."/>
            <person name="Stankovic T."/>
            <person name="McConville C.M."/>
            <person name="Smith A.D."/>
            <person name="Cooper P.R."/>
            <person name="Taylor A.M.R."/>
        </authorList>
    </citation>
    <scope>NUCLEOTIDE SEQUENCE [MRNA]</scope>
    <scope>FUNCTION</scope>
</reference>
<reference key="2">
    <citation type="submission" date="1997-08" db="EMBL/GenBank/DDBJ databases">
        <authorList>
            <person name="Longo K.A."/>
            <person name="North W.G."/>
            <person name="Du J."/>
            <person name="Fay M.J."/>
        </authorList>
    </citation>
    <scope>NUCLEOTIDE SEQUENCE [MRNA]</scope>
</reference>
<reference key="3">
    <citation type="submission" date="2000-12" db="EMBL/GenBank/DDBJ databases">
        <authorList>
            <person name="Kanaya K."/>
            <person name="Kamitani T."/>
        </authorList>
    </citation>
    <scope>NUCLEOTIDE SEQUENCE [MRNA]</scope>
    <source>
        <tissue>Testis</tissue>
    </source>
</reference>
<reference key="4">
    <citation type="journal article" date="2004" name="Nat. Genet.">
        <title>Complete sequencing and characterization of 21,243 full-length human cDNAs.</title>
        <authorList>
            <person name="Ota T."/>
            <person name="Suzuki Y."/>
            <person name="Nishikawa T."/>
            <person name="Otsuki T."/>
            <person name="Sugiyama T."/>
            <person name="Irie R."/>
            <person name="Wakamatsu A."/>
            <person name="Hayashi K."/>
            <person name="Sato H."/>
            <person name="Nagai K."/>
            <person name="Kimura K."/>
            <person name="Makita H."/>
            <person name="Sekine M."/>
            <person name="Obayashi M."/>
            <person name="Nishi T."/>
            <person name="Shibahara T."/>
            <person name="Tanaka T."/>
            <person name="Ishii S."/>
            <person name="Yamamoto J."/>
            <person name="Saito K."/>
            <person name="Kawai Y."/>
            <person name="Isono Y."/>
            <person name="Nakamura Y."/>
            <person name="Nagahari K."/>
            <person name="Murakami K."/>
            <person name="Yasuda T."/>
            <person name="Iwayanagi T."/>
            <person name="Wagatsuma M."/>
            <person name="Shiratori A."/>
            <person name="Sudo H."/>
            <person name="Hosoiri T."/>
            <person name="Kaku Y."/>
            <person name="Kodaira H."/>
            <person name="Kondo H."/>
            <person name="Sugawara M."/>
            <person name="Takahashi M."/>
            <person name="Kanda K."/>
            <person name="Yokoi T."/>
            <person name="Furuya T."/>
            <person name="Kikkawa E."/>
            <person name="Omura Y."/>
            <person name="Abe K."/>
            <person name="Kamihara K."/>
            <person name="Katsuta N."/>
            <person name="Sato K."/>
            <person name="Tanikawa M."/>
            <person name="Yamazaki M."/>
            <person name="Ninomiya K."/>
            <person name="Ishibashi T."/>
            <person name="Yamashita H."/>
            <person name="Murakawa K."/>
            <person name="Fujimori K."/>
            <person name="Tanai H."/>
            <person name="Kimata M."/>
            <person name="Watanabe M."/>
            <person name="Hiraoka S."/>
            <person name="Chiba Y."/>
            <person name="Ishida S."/>
            <person name="Ono Y."/>
            <person name="Takiguchi S."/>
            <person name="Watanabe S."/>
            <person name="Yosida M."/>
            <person name="Hotuta T."/>
            <person name="Kusano J."/>
            <person name="Kanehori K."/>
            <person name="Takahashi-Fujii A."/>
            <person name="Hara H."/>
            <person name="Tanase T.-O."/>
            <person name="Nomura Y."/>
            <person name="Togiya S."/>
            <person name="Komai F."/>
            <person name="Hara R."/>
            <person name="Takeuchi K."/>
            <person name="Arita M."/>
            <person name="Imose N."/>
            <person name="Musashino K."/>
            <person name="Yuuki H."/>
            <person name="Oshima A."/>
            <person name="Sasaki N."/>
            <person name="Aotsuka S."/>
            <person name="Yoshikawa Y."/>
            <person name="Matsunawa H."/>
            <person name="Ichihara T."/>
            <person name="Shiohata N."/>
            <person name="Sano S."/>
            <person name="Moriya S."/>
            <person name="Momiyama H."/>
            <person name="Satoh N."/>
            <person name="Takami S."/>
            <person name="Terashima Y."/>
            <person name="Suzuki O."/>
            <person name="Nakagawa S."/>
            <person name="Senoh A."/>
            <person name="Mizoguchi H."/>
            <person name="Goto Y."/>
            <person name="Shimizu F."/>
            <person name="Wakebe H."/>
            <person name="Hishigaki H."/>
            <person name="Watanabe T."/>
            <person name="Sugiyama A."/>
            <person name="Takemoto M."/>
            <person name="Kawakami B."/>
            <person name="Yamazaki M."/>
            <person name="Watanabe K."/>
            <person name="Kumagai A."/>
            <person name="Itakura S."/>
            <person name="Fukuzumi Y."/>
            <person name="Fujimori Y."/>
            <person name="Komiyama M."/>
            <person name="Tashiro H."/>
            <person name="Tanigami A."/>
            <person name="Fujiwara T."/>
            <person name="Ono T."/>
            <person name="Yamada K."/>
            <person name="Fujii Y."/>
            <person name="Ozaki K."/>
            <person name="Hirao M."/>
            <person name="Ohmori Y."/>
            <person name="Kawabata A."/>
            <person name="Hikiji T."/>
            <person name="Kobatake N."/>
            <person name="Inagaki H."/>
            <person name="Ikema Y."/>
            <person name="Okamoto S."/>
            <person name="Okitani R."/>
            <person name="Kawakami T."/>
            <person name="Noguchi S."/>
            <person name="Itoh T."/>
            <person name="Shigeta K."/>
            <person name="Senba T."/>
            <person name="Matsumura K."/>
            <person name="Nakajima Y."/>
            <person name="Mizuno T."/>
            <person name="Morinaga M."/>
            <person name="Sasaki M."/>
            <person name="Togashi T."/>
            <person name="Oyama M."/>
            <person name="Hata H."/>
            <person name="Watanabe M."/>
            <person name="Komatsu T."/>
            <person name="Mizushima-Sugano J."/>
            <person name="Satoh T."/>
            <person name="Shirai Y."/>
            <person name="Takahashi Y."/>
            <person name="Nakagawa K."/>
            <person name="Okumura K."/>
            <person name="Nagase T."/>
            <person name="Nomura N."/>
            <person name="Kikuchi H."/>
            <person name="Masuho Y."/>
            <person name="Yamashita R."/>
            <person name="Nakai K."/>
            <person name="Yada T."/>
            <person name="Nakamura Y."/>
            <person name="Ohara O."/>
            <person name="Isogai T."/>
            <person name="Sugano S."/>
        </authorList>
    </citation>
    <scope>NUCLEOTIDE SEQUENCE [LARGE SCALE MRNA]</scope>
    <source>
        <tissue>Testis</tissue>
    </source>
</reference>
<reference key="5">
    <citation type="submission" date="2005-07" db="EMBL/GenBank/DDBJ databases">
        <authorList>
            <person name="Mural R.J."/>
            <person name="Istrail S."/>
            <person name="Sutton G.G."/>
            <person name="Florea L."/>
            <person name="Halpern A.L."/>
            <person name="Mobarry C.M."/>
            <person name="Lippert R."/>
            <person name="Walenz B."/>
            <person name="Shatkay H."/>
            <person name="Dew I."/>
            <person name="Miller J.R."/>
            <person name="Flanigan M.J."/>
            <person name="Edwards N.J."/>
            <person name="Bolanos R."/>
            <person name="Fasulo D."/>
            <person name="Halldorsson B.V."/>
            <person name="Hannenhalli S."/>
            <person name="Turner R."/>
            <person name="Yooseph S."/>
            <person name="Lu F."/>
            <person name="Nusskern D.R."/>
            <person name="Shue B.C."/>
            <person name="Zheng X.H."/>
            <person name="Zhong F."/>
            <person name="Delcher A.L."/>
            <person name="Huson D.H."/>
            <person name="Kravitz S.A."/>
            <person name="Mouchard L."/>
            <person name="Reinert K."/>
            <person name="Remington K.A."/>
            <person name="Clark A.G."/>
            <person name="Waterman M.S."/>
            <person name="Eichler E.E."/>
            <person name="Adams M.D."/>
            <person name="Hunkapiller M.W."/>
            <person name="Myers E.W."/>
            <person name="Venter J.C."/>
        </authorList>
    </citation>
    <scope>NUCLEOTIDE SEQUENCE [LARGE SCALE GENOMIC DNA]</scope>
</reference>
<reference key="6">
    <citation type="journal article" date="2004" name="Genome Res.">
        <title>The status, quality, and expansion of the NIH full-length cDNA project: the Mammalian Gene Collection (MGC).</title>
        <authorList>
            <consortium name="The MGC Project Team"/>
        </authorList>
    </citation>
    <scope>NUCLEOTIDE SEQUENCE [LARGE SCALE MRNA]</scope>
    <source>
        <tissue>Placenta</tissue>
    </source>
</reference>
<reference key="7">
    <citation type="journal article" date="1999" name="Mol. Cell">
        <title>ROC1, a homolog of APC11, represents a family of cullin partners with an associated ubiquitin ligase activity.</title>
        <authorList>
            <person name="Ohta T."/>
            <person name="Michel J.J."/>
            <person name="Schottelius A.J."/>
            <person name="Xiong Y."/>
        </authorList>
    </citation>
    <scope>INTERACTION WITH RBX1 AND RNF7</scope>
</reference>
<reference key="8">
    <citation type="journal article" date="1999" name="Oncogene">
        <title>Covalent modification of all members of human cullin family proteins by NEDD8.</title>
        <authorList>
            <person name="Hori T."/>
            <person name="Osaka F."/>
            <person name="Chiba T."/>
            <person name="Miyamoto C."/>
            <person name="Okabayashi K."/>
            <person name="Shimbara N."/>
            <person name="Kato S."/>
            <person name="Tanaka K."/>
        </authorList>
    </citation>
    <scope>NEDDYLATION</scope>
</reference>
<reference key="9">
    <citation type="journal article" date="2001" name="J. Biol. Chem.">
        <title>Muf1, a novel elongin BC-interacting leucine-rich repeat protein that can assemble with Cul5 and Rbx1 to reconstitute a ubiquitin ligase.</title>
        <authorList>
            <person name="Kamura T."/>
            <person name="Burian D."/>
            <person name="Yan Q."/>
            <person name="Schmidt S.L."/>
            <person name="Lane W.S."/>
            <person name="Querido E."/>
            <person name="Branton P.E."/>
            <person name="Shilatifard A."/>
            <person name="Conaway R.C."/>
            <person name="Conaway J.W."/>
        </authorList>
    </citation>
    <scope>FUNCTION</scope>
    <scope>IDENTIFICATION IN E3 UBIQUITIN-PROTEIN LIGASE COMPLEX WITH LRRC41</scope>
    <scope>IDENTIFICATION IN A COMPLEX WITH ELOA</scope>
    <scope>IDENTIFICATION IN A COMPLEX WITH SOCS1</scope>
    <scope>IDENTIFICATION IN A COMPLEX WITH WSB1</scope>
</reference>
<reference key="10">
    <citation type="journal article" date="2002" name="J. Virol.">
        <title>Analysis of the adenovirus E1B-55K-anchored proteome reveals its link to ubiquitination machinery.</title>
        <authorList>
            <person name="Harada J.N."/>
            <person name="Shevchenko A."/>
            <person name="Shevchenko A."/>
            <person name="Pallas D.C."/>
            <person name="Berk A.J."/>
        </authorList>
    </citation>
    <scope>FUNCTION (MICROBIAL INFECTION)</scope>
    <scope>IDENTIFICATION IN COMPLEX WITH HUMAN ADENOVIRUS 5 PROTEINS E1B-55K AND E4-ORF6 (MICROBIAL INFECTION)</scope>
    <scope>NEDDYLATION</scope>
</reference>
<reference key="11">
    <citation type="journal article" date="2004" name="Genes Dev.">
        <title>Phosphorylation of a novel SOCS-box regulates assembly of the HIV-1 Vif-Cul5 complex that promotes APOBEC3G degradation.</title>
        <authorList>
            <person name="Mehle A."/>
            <person name="Goncalves J."/>
            <person name="Santa-Marta M."/>
            <person name="McPike M."/>
            <person name="Gabuzda D."/>
        </authorList>
    </citation>
    <scope>INTERACTION WITH HIV-1 VIF (MICROBIAL INFECTION)</scope>
</reference>
<reference key="12">
    <citation type="journal article" date="2004" name="Genes Dev.">
        <title>VHL-box and SOCS-box domains determine binding specificity for Cul2-Rbx1 and Cul5-Rbx2 modules of ubiquitin ligases.</title>
        <authorList>
            <person name="Kamura T."/>
            <person name="Maenaka K."/>
            <person name="Kotoshiba S."/>
            <person name="Matsumoto M."/>
            <person name="Kohda D."/>
            <person name="Conaway R.C."/>
            <person name="Conaway J.W."/>
            <person name="Nakayama K.I."/>
        </authorList>
    </citation>
    <scope>FUNCTION</scope>
    <scope>IDENTIFICATION IN THE ECS(LRRC41) COMPLEX</scope>
    <scope>IDENTIFICATION IN THE ECS(SOCS3) COMPLEX</scope>
    <scope>IDENTIFICATION IN THE ECS(SPSB1) COMPLEX</scope>
    <scope>IDENTIFICATION IN THE ECS(SPSB2) COMPLEX</scope>
    <scope>IDENTIFICATION IN THE ECS(SPSB4) COMPLEX</scope>
    <scope>IDENTIFICATION IN THE ECS(RAB40C) COMPLEX</scope>
    <scope>IDENTIFICATION IN THE ECS(WSB1) COMPLEX</scope>
    <scope>IDENTIFICATION BY MASS SPECTROMETRY</scope>
    <scope>INTERACTION WITH LRRC41; SOCS3; SPSB1; SPSB2; SPSB4; WSB1 AND RAB40C</scope>
</reference>
<reference key="13">
    <citation type="journal article" date="2005" name="FEBS Lett.">
        <title>ASB proteins interact with cullin5 and Rbx2 to form E3 ubiquitin ligase complexes.</title>
        <authorList>
            <person name="Kohroki J."/>
            <person name="Nishiyama T."/>
            <person name="Nakamura T."/>
            <person name="Masuho Y."/>
        </authorList>
    </citation>
    <scope>INTERACTION WITH ASB1; ASB2; ASB6; ASB7 AND ASB12</scope>
</reference>
<reference key="14">
    <citation type="journal article" date="2006" name="J. Biol. Chem.">
        <title>A zinc-binding region in Vif binds Cul5 and determines cullin selection.</title>
        <authorList>
            <person name="Mehle A."/>
            <person name="Thomas E.R."/>
            <person name="Rajendran K.S."/>
            <person name="Gabuzda D."/>
        </authorList>
    </citation>
    <scope>FUNCTION (MICROBIAL INFECTION)</scope>
    <scope>INTERACTION WITH HIV-1 VIF (MICROBIAL INFECTION)</scope>
</reference>
<reference key="15">
    <citation type="journal article" date="2008" name="J. Virol.">
        <title>Structural insight into the human immunodeficiency virus Vif SOCS box and its role in human E3 ubiquitin ligase assembly.</title>
        <authorList>
            <person name="Stanley B.J."/>
            <person name="Ehrlich E.S."/>
            <person name="Short L."/>
            <person name="Yu Y."/>
            <person name="Xiao Z."/>
            <person name="Yu X.F."/>
            <person name="Xiong Y."/>
        </authorList>
    </citation>
    <scope>INTERACTION WITH HIV-1 VIF (MICROBIAL INFECTION)</scope>
</reference>
<reference key="16">
    <citation type="journal article" date="2008" name="Proc. Natl. Acad. Sci. U.S.A.">
        <title>A quantitative atlas of mitotic phosphorylation.</title>
        <authorList>
            <person name="Dephoure N."/>
            <person name="Zhou C."/>
            <person name="Villen J."/>
            <person name="Beausoleil S.A."/>
            <person name="Bakalarski C.E."/>
            <person name="Elledge S.J."/>
            <person name="Gygi S.P."/>
        </authorList>
    </citation>
    <scope>PHOSPHORYLATION [LARGE SCALE ANALYSIS] AT THR-210</scope>
    <scope>IDENTIFICATION BY MASS SPECTROMETRY [LARGE SCALE ANALYSIS]</scope>
    <source>
        <tissue>Cervix carcinoma</tissue>
    </source>
</reference>
<reference key="17">
    <citation type="journal article" date="2009" name="Proc. Natl. Acad. Sci. U.S.A.">
        <title>Distinct ubiquitin ligases act sequentially for RNA polymerase II polyubiquitylation.</title>
        <authorList>
            <person name="Harreman M."/>
            <person name="Taschner M."/>
            <person name="Sigurdsson S."/>
            <person name="Anindya R."/>
            <person name="Reid J."/>
            <person name="Somesh B."/>
            <person name="Kong S.E."/>
            <person name="Banks C.A."/>
            <person name="Conaway R.C."/>
            <person name="Conaway J.W."/>
            <person name="Svejstrup J.Q."/>
        </authorList>
    </citation>
    <scope>FUNCTION</scope>
    <scope>IDENTIFICATION IN COMPLEX WITH ELOA; ELOB; ELOC AND RBX1</scope>
</reference>
<reference key="18">
    <citation type="journal article" date="2010" name="PLoS Pathog.">
        <title>The SOCS-box of HIV-1 Vif interacts with ElonginBC by induced-folding to recruit its Cul5-containing ubiquitin ligase complex.</title>
        <authorList>
            <person name="Bergeron J.R."/>
            <person name="Huthoff H."/>
            <person name="Veselkov D.A."/>
            <person name="Beavil R.L."/>
            <person name="Simpson P.J."/>
            <person name="Matthews S.J."/>
            <person name="Malim M.H."/>
            <person name="Sanderson M.R."/>
        </authorList>
    </citation>
    <scope>INTERACTION WITH HIV-1 VIF (MICROBIAL INFECTION)</scope>
</reference>
<reference key="19">
    <citation type="journal article" date="2011" name="BMC Syst. Biol.">
        <title>Initial characterization of the human central proteome.</title>
        <authorList>
            <person name="Burkard T.R."/>
            <person name="Planyavsky M."/>
            <person name="Kaupe I."/>
            <person name="Breitwieser F.P."/>
            <person name="Buerckstuemmer T."/>
            <person name="Bennett K.L."/>
            <person name="Superti-Furga G."/>
            <person name="Colinge J."/>
        </authorList>
    </citation>
    <scope>IDENTIFICATION BY MASS SPECTROMETRY [LARGE SCALE ANALYSIS]</scope>
</reference>
<reference key="20">
    <citation type="journal article" date="2011" name="Cell Res.">
        <title>Notch-induced Asb2 expression promotes protein ubiquitination by forming non-canonical E3 ligase complexes.</title>
        <authorList>
            <person name="Nie L."/>
            <person name="Zhao Y."/>
            <person name="Wu W."/>
            <person name="Yang Y.Z."/>
            <person name="Wang H.C."/>
            <person name="Sun X.H."/>
        </authorList>
    </citation>
    <scope>INTERACTION WITH ASB2</scope>
</reference>
<reference key="21">
    <citation type="journal article" date="2011" name="J. Biol. Chem.">
        <title>Regulation of inducible nitric-oxide synthase by the SPRY domain- and SOCS box-containing proteins.</title>
        <authorList>
            <person name="Nishiya T."/>
            <person name="Matsumoto K."/>
            <person name="Maekawa S."/>
            <person name="Kajita E."/>
            <person name="Horinouchi T."/>
            <person name="Fujimuro M."/>
            <person name="Ogasawara K."/>
            <person name="Uehara T."/>
            <person name="Miwa S."/>
        </authorList>
    </citation>
    <scope>FUNCTION</scope>
</reference>
<reference key="22">
    <citation type="journal article" date="2011" name="J. Virol.">
        <title>Kaposi's sarcoma-associated herpesvirus-encoded latency-associated nuclear antigen reduces interleukin-8 expression in endothelial cells and impairs neutrophil chemotaxis by degrading nuclear p65.</title>
        <authorList>
            <person name="Li X."/>
            <person name="Liang D."/>
            <person name="Lin X."/>
            <person name="Robertson E.S."/>
            <person name="Lan K."/>
        </authorList>
    </citation>
    <scope>INTERACTION WITH HERPES VIRUS 8 PROTEIN LANA1 (MICROBIAL INFECTION)</scope>
</reference>
<reference key="23">
    <citation type="journal article" date="2011" name="Nature">
        <title>Vif hijacks CBF-beta to degrade APOBEC3G and promote HIV-1 infection.</title>
        <authorList>
            <person name="Jaeger S."/>
            <person name="Kim D.Y."/>
            <person name="Hultquist J.F."/>
            <person name="Shindo K."/>
            <person name="LaRue R.S."/>
            <person name="Kwon E."/>
            <person name="Li M."/>
            <person name="Anderson B.D."/>
            <person name="Yen L."/>
            <person name="Stanley D."/>
            <person name="Mahon C."/>
            <person name="Kane J."/>
            <person name="Franks-Skiba K."/>
            <person name="Cimermancic P."/>
            <person name="Burlingame A."/>
            <person name="Sali A."/>
            <person name="Craik C.S."/>
            <person name="Harris R.S."/>
            <person name="Gross J.D."/>
            <person name="Krogan N.J."/>
        </authorList>
    </citation>
    <scope>FUNCTION (MICROBIAL INFECTION)</scope>
    <scope>IDENTIFICATION IN AN ECS COMPLEX (MICROBIAL INFECTION)</scope>
</reference>
<reference key="24">
    <citation type="journal article" date="2013" name="EMBO J.">
        <title>TRIAD1 and HHARI bind to and are activated by distinct neddylated Cullin-RING ligase complexes.</title>
        <authorList>
            <person name="Kelsall I.R."/>
            <person name="Duda D.M."/>
            <person name="Olszewski J.L."/>
            <person name="Hofmann K."/>
            <person name="Knebel A."/>
            <person name="Langevin F."/>
            <person name="Wood N."/>
            <person name="Wightman M."/>
            <person name="Schulman B.A."/>
            <person name="Alpi A.F."/>
        </authorList>
    </citation>
    <scope>INTERACTION WITH ARIH2</scope>
    <scope>NEDDYLATION</scope>
</reference>
<reference key="25">
    <citation type="journal article" date="2013" name="J. Proteome Res.">
        <title>Toward a comprehensive characterization of a human cancer cell phosphoproteome.</title>
        <authorList>
            <person name="Zhou H."/>
            <person name="Di Palma S."/>
            <person name="Preisinger C."/>
            <person name="Peng M."/>
            <person name="Polat A.N."/>
            <person name="Heck A.J."/>
            <person name="Mohammed S."/>
        </authorList>
    </citation>
    <scope>PHOSPHORYLATION [LARGE SCALE ANALYSIS] AT SER-34</scope>
    <scope>IDENTIFICATION BY MASS SPECTROMETRY [LARGE SCALE ANALYSIS]</scope>
    <source>
        <tissue>Erythroleukemia</tissue>
    </source>
</reference>
<reference key="26">
    <citation type="journal article" date="2013" name="Structure">
        <title>Structural conservation of distinctive N-terminal acetylation-dependent interactions across a family of mammalian NEDD8 ligation enzymes.</title>
        <authorList>
            <person name="Monda J.K."/>
            <person name="Scott D.C."/>
            <person name="Miller D.J."/>
            <person name="Lydeard J."/>
            <person name="King D."/>
            <person name="Harper J.W."/>
            <person name="Bennett E.J."/>
            <person name="Schulman B.A."/>
        </authorList>
    </citation>
    <scope>INTERACTION WITH DCUN1D1; DCUN1D2; DCUN1D3; DCUN1D4 AND DCUN1D5</scope>
</reference>
<reference key="27">
    <citation type="journal article" date="2014" name="J. Biol. Chem.">
        <title>Protein interaction screening for the ankyrin repeats and suppressor of cytokine signaling (SOCS) box (ASB) family identify Asb11 as a novel endoplasmic reticulum resident ubiquitin ligase.</title>
        <authorList>
            <person name="Andresen C.A."/>
            <person name="Smedegaard S."/>
            <person name="Sylvestersen K.B."/>
            <person name="Svensson C."/>
            <person name="Iglesias-Gato D."/>
            <person name="Cazzamali G."/>
            <person name="Nielsen T.K."/>
            <person name="Nielsen M.L."/>
            <person name="Flores-Morales A."/>
        </authorList>
    </citation>
    <scope>IDENTIFICATION IN THE ECS(ASB11) COMPLEX</scope>
</reference>
<reference key="28">
    <citation type="journal article" date="2015" name="J. Virol.">
        <title>Poxvirus protein MC132 from molluscum contagiosum virus inhibits NF-B activation by targeting p65 for degradation.</title>
        <authorList>
            <person name="Brady G."/>
            <person name="Haas D.A."/>
            <person name="Farrell P.J."/>
            <person name="Pichlmair A."/>
            <person name="Bowie A.G."/>
        </authorList>
    </citation>
    <scope>INTERACTION WITH MOLLUSCUM CONTAGIOSUM VIRUS PROTEIN MC132 (MICROBIAL INFECTION)</scope>
</reference>
<reference key="29">
    <citation type="journal article" date="2011" name="PLoS ONE">
        <title>The SOCS2 ubiquitin ligase complex regulates growth hormone receptor levels.</title>
        <authorList>
            <person name="Vesterlund M."/>
            <person name="Zadjali F."/>
            <person name="Persson T."/>
            <person name="Nielsen M.L."/>
            <person name="Kessler B.M."/>
            <person name="Norstedt G."/>
            <person name="Flores-Morales A."/>
        </authorList>
    </citation>
    <scope>FUNCTION</scope>
    <scope>IDENTIFICATION IN THE ECS(SOCS2) COMPLEX</scope>
    <scope>PATHWAY</scope>
</reference>
<reference key="30">
    <citation type="journal article" date="2015" name="J. Biol. Chem.">
        <title>Biophysical studies on interactions and assembly of full-size E3 ubiquitin ligase: suppressor of cytokine signaling 2 (SOCS2)-elongin BC-cullin 5-ring box protein 2 (RBX2).</title>
        <authorList>
            <person name="Bulatov E."/>
            <person name="Martin E.M."/>
            <person name="Chatterjee S."/>
            <person name="Knebel A."/>
            <person name="Shimamura S."/>
            <person name="Konijnenberg A."/>
            <person name="Johnson C."/>
            <person name="Zinn N."/>
            <person name="Grandi P."/>
            <person name="Sobott F."/>
            <person name="Ciulli A."/>
        </authorList>
    </citation>
    <scope>FUNCTION</scope>
    <scope>PATHWAY</scope>
    <scope>IDENTIFICATION IN THE ECS(SOCS2) COMPLEX</scope>
</reference>
<reference key="31">
    <citation type="journal article" date="2015" name="J. Cell Biol.">
        <title>PAK4 promotes kinase-independent stabilization of RhoU to modulate cell adhesion.</title>
        <authorList>
            <person name="Dart A.E."/>
            <person name="Box G.M."/>
            <person name="Court W."/>
            <person name="Gale M.E."/>
            <person name="Brown J.P."/>
            <person name="Pinder S.E."/>
            <person name="Eccles S.A."/>
            <person name="Wells C.M."/>
        </authorList>
    </citation>
    <scope>FUNCTION</scope>
    <scope>IDENTIFICATION IN THE ECS(RAB40A) COMPLEX</scope>
</reference>
<reference key="32">
    <citation type="journal article" date="2016" name="J. Cell Sci.">
        <title>Characterization of the mammalian family of DCN-type NEDD8 E3 ligases.</title>
        <authorList>
            <person name="Keuss M.J."/>
            <person name="Thomas Y."/>
            <person name="Mcarthur R."/>
            <person name="Wood N.T."/>
            <person name="Knebel A."/>
            <person name="Kurz T."/>
        </authorList>
    </citation>
    <scope>INTERACTION WITH DCUN1D1; DCUN1D2; DCUN1D3; DCUN1D4 AND DCUN1D5</scope>
</reference>
<reference key="33">
    <citation type="journal article" date="2016" name="Sci. Rep.">
        <title>SAG/RBX2 E3 ligase complexes with UBCH10 and UBE2S E2s to ubiquitylate beta-TrCP1 via K11-linkage for degradation.</title>
        <authorList>
            <person name="Kuang P."/>
            <person name="Tan M."/>
            <person name="Zhou W."/>
            <person name="Zhang Q."/>
            <person name="Sun Y."/>
        </authorList>
    </citation>
    <scope>FUNCTION</scope>
    <scope>PATHWAY</scope>
    <scope>IDENTIFICATION IN AN ECS COMPLEX</scope>
</reference>
<reference key="34">
    <citation type="journal article" date="2017" name="J. Biol. Chem.">
        <title>Cockayne syndrome B protein regulates recruitment of the Elongin A ubiquitin ligase to sites of DNA damage.</title>
        <authorList>
            <person name="Weems J.C."/>
            <person name="Slaughter B.D."/>
            <person name="Unruh J.R."/>
            <person name="Boeing S."/>
            <person name="Hall S.M."/>
            <person name="McLaird M.B."/>
            <person name="Yasukawa T."/>
            <person name="Aso T."/>
            <person name="Svejstrup J.Q."/>
            <person name="Conaway J.W."/>
            <person name="Conaway R.C."/>
        </authorList>
    </citation>
    <scope>INTERACTION WITH ERCC6 AND ELOA</scope>
</reference>
<reference key="35">
    <citation type="journal article" date="2019" name="J. Cell Biol.">
        <title>BIK ubiquitination by the E3 ligase Cul5-ASB11 determines cell fate during cellular stress.</title>
        <authorList>
            <person name="Chen F.Y."/>
            <person name="Huang M.Y."/>
            <person name="Lin Y.M."/>
            <person name="Ho C.H."/>
            <person name="Lin S.Y."/>
            <person name="Chen H.Y."/>
            <person name="Hung M.C."/>
            <person name="Chen R.H."/>
        </authorList>
    </citation>
    <scope>IDENTIFICATION IN THE ECS(ASB11) COMPLEX</scope>
</reference>
<reference key="36">
    <citation type="journal article" date="2020" name="IScience">
        <title>Cul5-type ubiquitin ligase KLHDC1 contributes to the elimination of truncated SELENOS produced by failed UGA/Sec decoding.</title>
        <authorList>
            <person name="Okumura F."/>
            <person name="Fujiki Y."/>
            <person name="Oki N."/>
            <person name="Osaki K."/>
            <person name="Nishikimi A."/>
            <person name="Fukui Y."/>
            <person name="Nakatsukasa K."/>
            <person name="Kamura T."/>
        </authorList>
    </citation>
    <scope>FUNCTION</scope>
    <scope>PATHWAY</scope>
    <scope>IDENTIFICATION IN A E3 UBIQUITIN-PROTEIN LIGASE COMPLEX CONTAINING KLHDC1</scope>
</reference>
<reference key="37">
    <citation type="journal article" date="2021" name="J. Cell Biol.">
        <title>Rab40-Cullin5 complex regulates EPLIN and actin cytoskeleton dynamics during cell migration.</title>
        <authorList>
            <person name="Linklater E.S."/>
            <person name="Duncan E.D."/>
            <person name="Han K.J."/>
            <person name="Kaupinis A."/>
            <person name="Valius M."/>
            <person name="Lyons T.R."/>
            <person name="Prekeris R."/>
        </authorList>
    </citation>
    <scope>FUNCTION</scope>
    <scope>IDENTIFICATION IN THE ECS(RAB40B) COMPLEX</scope>
</reference>
<reference key="38">
    <citation type="journal article" date="2021" name="Mol. Cell. Proteomics">
        <title>The mechanism of NEDD8 activation of CUL5 Ubiquitin E3 ligases.</title>
        <authorList>
            <person name="Lumpkin R.J."/>
            <person name="Ahmad A.S."/>
            <person name="Blake R."/>
            <person name="Condon C.J."/>
            <person name="Komives E.A."/>
        </authorList>
    </citation>
    <scope>FUNCTION</scope>
    <scope>PATHWAY</scope>
    <scope>IDENTIFICATION IN THE ECS(ASB9) COMPLEX</scope>
    <scope>INTERACTION WITH ARIH2</scope>
    <scope>NEDDYLATION AT LYS-724</scope>
    <scope>MUTAGENESIS OF LYS-724</scope>
</reference>
<reference key="39">
    <citation type="journal article" date="2022" name="Biochemistry">
        <title>Human Protein-l-isoaspartate O-Methyltransferase Domain-Containing Protein 1 (PCMTD1) Associates with Cullin-RING Ligase Proteins.</title>
        <authorList>
            <person name="Warmack R.A."/>
            <person name="Pang E.Z."/>
            <person name="Peluso E."/>
            <person name="Lowenson J.D."/>
            <person name="Ong J.Y."/>
            <person name="Torres J.Z."/>
            <person name="Clarke S.G."/>
        </authorList>
    </citation>
    <scope>IDENTIFICATION IN A E3 UBIQUITIN-PROTEIN LIGASE COMPLEX CONTAINING PCMTD1</scope>
</reference>
<reference key="40">
    <citation type="journal article" date="2022" name="DNA Repair">
        <title>UBAP2/UBAP2L regulate UV-induced ubiquitylation of RNA polymerase II and are the human orthologues of yeast Def1.</title>
        <authorList>
            <person name="Herlihy A.E."/>
            <person name="Boeing S."/>
            <person name="Weems J.C."/>
            <person name="Walker J."/>
            <person name="Dirac-Svejstrup A.B."/>
            <person name="Lehner M.H."/>
            <person name="Conaway R.C."/>
            <person name="Conaway J.W."/>
            <person name="Svejstrup J.Q."/>
        </authorList>
    </citation>
    <scope>SUBCELLULAR LOCATION</scope>
</reference>
<reference key="41">
    <citation type="journal article" date="2022" name="J. Cell Biol.">
        <title>Ubiquitylation by Rab40b/Cul5 regulates Rap2 localization and activity during cell migration.</title>
        <authorList>
            <person name="Duncan E.D."/>
            <person name="Han K.J."/>
            <person name="Trout M.A."/>
            <person name="Prekeris R."/>
        </authorList>
    </citation>
    <scope>FUNCTION</scope>
    <scope>IDENTIFICATION IN THE ECS(RAB40B) COMPLEX</scope>
</reference>
<reference key="42">
    <citation type="journal article" date="2022" name="Life. Sci Alliance">
        <title>Rab40c regulates focal adhesions and PP6 activity by controlling ANKRD28 ubiquitylation.</title>
        <authorList>
            <person name="Han K.J."/>
            <person name="Mikalayeva V."/>
            <person name="Gerber S.A."/>
            <person name="Kettenbach A.N."/>
            <person name="Skeberdis V.A."/>
            <person name="Prekeris R."/>
        </authorList>
    </citation>
    <scope>FUNCTION</scope>
    <scope>IDENTIFICATION IN THE ECS(RAB40C) COMPLEX</scope>
</reference>
<reference key="43">
    <citation type="journal article" date="2024" name="Dev. Cell">
        <title>The UBE2F-CRL5ASB11-DIRAS2 axis is an oncogene and tumor suppressor cascade in pancreatic cancer cells.</title>
        <authorList>
            <person name="Chang Y."/>
            <person name="Chen Q."/>
            <person name="Li H."/>
            <person name="Xu J."/>
            <person name="Tan M."/>
            <person name="Xiong X."/>
            <person name="Sun Y."/>
        </authorList>
    </citation>
    <scope>IDENTIFICATION IN THE ECS(ASB11) COMPLEX</scope>
</reference>
<reference key="44">
    <citation type="journal article" date="2024" name="Nature">
        <title>The CRL5-SPSB3 ubiquitin ligase targets nuclear cGAS for degradation.</title>
        <authorList>
            <person name="Xu P."/>
            <person name="Liu Y."/>
            <person name="Liu C."/>
            <person name="Guey B."/>
            <person name="Li L."/>
            <person name="Melenec P."/>
            <person name="Ricci J."/>
            <person name="Ablasser A."/>
        </authorList>
    </citation>
    <scope>FUNCTION</scope>
    <scope>PATHWAY</scope>
    <scope>IDENTIFICATION IN THE ECS(SPSB3) COMPLEX</scope>
    <scope>SUBCELLULAR LOCATION</scope>
</reference>
<reference key="45">
    <citation type="journal article" date="2008" name="Cell">
        <title>Structural insights into NEDD8 activation of cullin-RING ligases: conformational control of conjugation.</title>
        <authorList>
            <person name="Duda D.M."/>
            <person name="Borg L.A."/>
            <person name="Scott D.C."/>
            <person name="Hunt H.W."/>
            <person name="Hammel M."/>
            <person name="Schulman B.A."/>
        </authorList>
    </citation>
    <scope>X-RAY CRYSTALLOGRAPHY (2.6 ANGSTROMS) OF 401-780 IN COMPLEX WITH NEDD8 AND RBX1</scope>
    <scope>NEDDYLATION AT LYS-724</scope>
</reference>
<reference evidence="49" key="46">
    <citation type="journal article" date="2013" name="Acta Crystallogr. D">
        <title>Structural basis of intersubunit recognition in elongin BC-cullin 5-SOCS box ubiquitin-protein ligase complexes.</title>
        <authorList>
            <person name="Kim Y.K."/>
            <person name="Kwak M.J."/>
            <person name="Ku B."/>
            <person name="Suh H.Y."/>
            <person name="Joo K."/>
            <person name="Lee J."/>
            <person name="Jung J.U."/>
            <person name="Oh B.H."/>
        </authorList>
    </citation>
    <scope>X-RAY CRYSTALLOGRAPHY (3.00 ANGSTROMS) OF 10-386 IN COMPLEX WITH ELOB; ELOC AND SOCS2</scope>
    <scope>FUNCTION</scope>
    <scope>IDENTIFICATION IN THE ECS(SOCS2) COMPLEX</scope>
    <scope>MUTAGENESIS OF TRP-53</scope>
</reference>
<reference evidence="50" key="47">
    <citation type="journal article" date="2014" name="Nature">
        <title>Structural basis for hijacking CBF-beta and CUL5 E3 ligase complex by HIV-1 Vif.</title>
        <authorList>
            <person name="Guo Y."/>
            <person name="Dong L."/>
            <person name="Qiu X."/>
            <person name="Wang Y."/>
            <person name="Zhang B."/>
            <person name="Liu H."/>
            <person name="Yu Y."/>
            <person name="Zang Y."/>
            <person name="Yang M."/>
            <person name="Huang Z."/>
        </authorList>
    </citation>
    <scope>X-RAY CRYSTALLOGRAPHY (3.30 ANGSTROMS) OF 12-321 IN COMPLEX WITH CBFB; ELOB; ELOC AND HIV-1 VIF</scope>
    <scope>IDENTIFICATION IN AN ECS COMPLEX (MICROBIAL INFECTION)</scope>
    <scope>MUTAGENESIS OF LEU-52; TRP-53 AND ASP-55</scope>
</reference>
<reference evidence="51" key="48">
    <citation type="journal article" date="2020" name="Nat. Commun.">
        <title>Structure and dynamics of the ASB9 CUL-RING E3 ligase.</title>
        <authorList>
            <person name="Lumpkin R.J."/>
            <person name="Baker R.W."/>
            <person name="Leschziner A.E."/>
            <person name="Komives E.A."/>
        </authorList>
    </citation>
    <scope>STRUCTURE BY ELECTRON MICROSCOPY (5.20 ANGSTROMS) OF 2-780 IN COMPLEX WITH RNF7</scope>
    <scope>INTERACTION WITH RNF7</scope>
</reference>
<reference evidence="52" key="49">
    <citation type="journal article" date="2021" name="Nat. Chem. Biol.">
        <title>CUL5-ARIH2 E3-E3 ubiquitin ligase structure reveals cullin-specific NEDD8 activation.</title>
        <authorList>
            <person name="Kostrhon S."/>
            <person name="Prabu J.R."/>
            <person name="Baek K."/>
            <person name="Horn-Ghetko D."/>
            <person name="von Gronau S."/>
            <person name="Kluegel M."/>
            <person name="Basquin J."/>
            <person name="Alpi A.F."/>
            <person name="Schulman B.A."/>
        </authorList>
    </citation>
    <scope>STRUCTURE BY ELECTRON MICROSCOPY (3.40 ANGSTROMS) IN COMPLEX WITH ARIH2; RBX2 AND ZINC</scope>
    <scope>INTERACTION WITH ARIH2</scope>
    <scope>NEDDYLATION AT LYS-724</scope>
    <scope>MUTAGENESIS OF ARG-460; 617-GLU--GLU-624; ARG-691; LEU-710 AND GLU-717</scope>
</reference>
<reference evidence="53" key="50">
    <citation type="journal article" date="2023" name="Nat. Commun.">
        <title>Structural basis of HIV-1 Vif-mediated E3 ligase targeting of host APOBEC3H.</title>
        <authorList>
            <person name="Ito F."/>
            <person name="Alvarez-Cabrera A.L."/>
            <person name="Kim K."/>
            <person name="Zhou Z.H."/>
            <person name="Chen X.S."/>
        </authorList>
    </citation>
    <scope>STRUCTURE BY ELECTRON MICROSCOPY (3.54 ANGSTROMS) OF 12-320 IN COMPLEX WITH CBFB; ELOB; ELOC AND HIV-1 VIF</scope>
    <scope>FUNCTION (MICROBIAL INFECTION)</scope>
    <scope>IDENTIFICATION IN AN ECS COMPLEX (MICROBIAL INFECTION)</scope>
</reference>
<proteinExistence type="evidence at protein level"/>
<evidence type="ECO:0000250" key="1">
    <source>
        <dbReference type="UniProtKB" id="Q9D5V5"/>
    </source>
</evidence>
<evidence type="ECO:0000255" key="2"/>
<evidence type="ECO:0000255" key="3">
    <source>
        <dbReference type="PROSITE-ProRule" id="PRU00330"/>
    </source>
</evidence>
<evidence type="ECO:0000269" key="4">
    <source>
    </source>
</evidence>
<evidence type="ECO:0000269" key="5">
    <source>
    </source>
</evidence>
<evidence type="ECO:0000269" key="6">
    <source>
    </source>
</evidence>
<evidence type="ECO:0000269" key="7">
    <source>
    </source>
</evidence>
<evidence type="ECO:0000269" key="8">
    <source>
    </source>
</evidence>
<evidence type="ECO:0000269" key="9">
    <source>
    </source>
</evidence>
<evidence type="ECO:0000269" key="10">
    <source>
    </source>
</evidence>
<evidence type="ECO:0000269" key="11">
    <source>
    </source>
</evidence>
<evidence type="ECO:0000269" key="12">
    <source>
    </source>
</evidence>
<evidence type="ECO:0000269" key="13">
    <source>
    </source>
</evidence>
<evidence type="ECO:0000269" key="14">
    <source>
    </source>
</evidence>
<evidence type="ECO:0000269" key="15">
    <source>
    </source>
</evidence>
<evidence type="ECO:0000269" key="16">
    <source>
    </source>
</evidence>
<evidence type="ECO:0000269" key="17">
    <source>
    </source>
</evidence>
<evidence type="ECO:0000269" key="18">
    <source>
    </source>
</evidence>
<evidence type="ECO:0000269" key="19">
    <source>
    </source>
</evidence>
<evidence type="ECO:0000269" key="20">
    <source>
    </source>
</evidence>
<evidence type="ECO:0000269" key="21">
    <source>
    </source>
</evidence>
<evidence type="ECO:0000269" key="22">
    <source>
    </source>
</evidence>
<evidence type="ECO:0000269" key="23">
    <source>
    </source>
</evidence>
<evidence type="ECO:0000269" key="24">
    <source>
    </source>
</evidence>
<evidence type="ECO:0000269" key="25">
    <source>
    </source>
</evidence>
<evidence type="ECO:0000269" key="26">
    <source>
    </source>
</evidence>
<evidence type="ECO:0000269" key="27">
    <source>
    </source>
</evidence>
<evidence type="ECO:0000269" key="28">
    <source>
    </source>
</evidence>
<evidence type="ECO:0000269" key="29">
    <source>
    </source>
</evidence>
<evidence type="ECO:0000269" key="30">
    <source>
    </source>
</evidence>
<evidence type="ECO:0000269" key="31">
    <source>
    </source>
</evidence>
<evidence type="ECO:0000269" key="32">
    <source>
    </source>
</evidence>
<evidence type="ECO:0000269" key="33">
    <source>
    </source>
</evidence>
<evidence type="ECO:0000269" key="34">
    <source>
    </source>
</evidence>
<evidence type="ECO:0000269" key="35">
    <source>
    </source>
</evidence>
<evidence type="ECO:0000269" key="36">
    <source>
    </source>
</evidence>
<evidence type="ECO:0000269" key="37">
    <source>
    </source>
</evidence>
<evidence type="ECO:0000269" key="38">
    <source>
    </source>
</evidence>
<evidence type="ECO:0000269" key="39">
    <source>
    </source>
</evidence>
<evidence type="ECO:0000269" key="40">
    <source>
    </source>
</evidence>
<evidence type="ECO:0000269" key="41">
    <source>
    </source>
</evidence>
<evidence type="ECO:0000269" key="42">
    <source>
    </source>
</evidence>
<evidence type="ECO:0000269" key="43">
    <source>
    </source>
</evidence>
<evidence type="ECO:0000269" key="44">
    <source>
    </source>
</evidence>
<evidence type="ECO:0000303" key="45">
    <source>
    </source>
</evidence>
<evidence type="ECO:0000303" key="46">
    <source>
    </source>
</evidence>
<evidence type="ECO:0000305" key="47"/>
<evidence type="ECO:0000312" key="48">
    <source>
        <dbReference type="HGNC" id="HGNC:2556"/>
    </source>
</evidence>
<evidence type="ECO:0007744" key="49">
    <source>
        <dbReference type="PDB" id="4JGH"/>
    </source>
</evidence>
<evidence type="ECO:0007744" key="50">
    <source>
        <dbReference type="PDB" id="4N9F"/>
    </source>
</evidence>
<evidence type="ECO:0007744" key="51">
    <source>
        <dbReference type="PDB" id="6V9I"/>
    </source>
</evidence>
<evidence type="ECO:0007744" key="52">
    <source>
        <dbReference type="PDB" id="7ONI"/>
    </source>
</evidence>
<evidence type="ECO:0007744" key="53">
    <source>
        <dbReference type="PDB" id="8FVJ"/>
    </source>
</evidence>
<evidence type="ECO:0007744" key="54">
    <source>
    </source>
</evidence>
<evidence type="ECO:0007744" key="55">
    <source>
    </source>
</evidence>
<evidence type="ECO:0007829" key="56">
    <source>
        <dbReference type="PDB" id="3DPL"/>
    </source>
</evidence>
<evidence type="ECO:0007829" key="57">
    <source>
        <dbReference type="PDB" id="4JGH"/>
    </source>
</evidence>
<evidence type="ECO:0007829" key="58">
    <source>
        <dbReference type="PDB" id="4N9F"/>
    </source>
</evidence>
<evidence type="ECO:0007829" key="59">
    <source>
        <dbReference type="PDB" id="7ONI"/>
    </source>
</evidence>
<evidence type="ECO:0007829" key="60">
    <source>
        <dbReference type="PDB" id="8EI2"/>
    </source>
</evidence>
<feature type="chain" id="PRO_0000119797" description="Cullin-5">
    <location>
        <begin position="1"/>
        <end position="780"/>
    </location>
</feature>
<feature type="domain" description="Cullin neddylation" evidence="2">
    <location>
        <begin position="711"/>
        <end position="772"/>
    </location>
</feature>
<feature type="modified residue" description="Phosphoserine" evidence="55">
    <location>
        <position position="34"/>
    </location>
</feature>
<feature type="modified residue" description="Phosphothreonine" evidence="54">
    <location>
        <position position="210"/>
    </location>
</feature>
<feature type="cross-link" description="Glycyl lysine isopeptide (Lys-Gly) (interchain with G-Cter in NEDD8)" evidence="12 34 36 52">
    <location>
        <position position="724"/>
    </location>
</feature>
<feature type="mutagenesis site" description="Strongly impaired interaction with HIV-1 Vif protein." evidence="24">
    <original>L</original>
    <variation>V</variation>
    <location>
        <position position="52"/>
    </location>
</feature>
<feature type="mutagenesis site" description="Strongly impaired interaction with HIV-1 Vif protein. Decreased interaction ith SOCS2." evidence="21 24">
    <original>W</original>
    <variation>A</variation>
    <location>
        <position position="53"/>
    </location>
</feature>
<feature type="mutagenesis site" description="Strongly impaired interaction with HIV-1 Vif protein." evidence="24">
    <original>D</original>
    <variation>A</variation>
    <location>
        <position position="55"/>
    </location>
</feature>
<feature type="mutagenesis site" description="Impaired interaction with ARIH2." evidence="36">
    <original>R</original>
    <variation>A</variation>
    <location>
        <position position="460"/>
    </location>
</feature>
<feature type="mutagenesis site" description="Impaired interaction with ARIH2." evidence="36">
    <original>ENLKLATE</original>
    <variation>ANLKAATA</variation>
    <location>
        <begin position="617"/>
        <end position="624"/>
    </location>
</feature>
<feature type="mutagenesis site" description="Impaired interaction with ARIH2." evidence="36">
    <original>R</original>
    <variation>A</variation>
    <location>
        <position position="691"/>
    </location>
</feature>
<feature type="mutagenesis site" description="Impaired interaction with ARIH2." evidence="36">
    <original>L</original>
    <variation>D</variation>
    <location>
        <position position="710"/>
    </location>
</feature>
<feature type="mutagenesis site" description="Impaired interaction with ARIH2." evidence="36">
    <original>E</original>
    <variation>A</variation>
    <location>
        <position position="717"/>
    </location>
</feature>
<feature type="mutagenesis site" description="Abolished neddylation and interaction with ARIH2." evidence="34">
    <original>K</original>
    <variation>R</variation>
    <location>
        <position position="724"/>
    </location>
</feature>
<feature type="sequence conflict" description="In Ref. 2; AAB70253." evidence="47" ref="2">
    <original>N</original>
    <variation>D</variation>
    <location>
        <position position="9"/>
    </location>
</feature>
<feature type="sequence conflict" description="In Ref. 2; AAB70253." evidence="47" ref="2">
    <original>S</original>
    <variation>F</variation>
    <location>
        <position position="12"/>
    </location>
</feature>
<feature type="sequence conflict" description="In Ref. 2; AAB70253." evidence="47" ref="2">
    <original>E</original>
    <variation>G</variation>
    <location>
        <position position="16"/>
    </location>
</feature>
<feature type="sequence conflict" description="In Ref. 2; AAB70253." evidence="47" ref="2">
    <original>QES</original>
    <variation>RDF</variation>
    <location>
        <begin position="32"/>
        <end position="34"/>
    </location>
</feature>
<feature type="sequence conflict" description="In Ref. 2; AAB70253." evidence="47" ref="2">
    <original>Q</original>
    <variation>R</variation>
    <location>
        <position position="38"/>
    </location>
</feature>
<feature type="sequence conflict" description="In Ref. 2; AAB70253." evidence="47" ref="2">
    <original>VCL</original>
    <variation>FCF</variation>
    <location>
        <begin position="50"/>
        <end position="52"/>
    </location>
</feature>
<feature type="sequence conflict" description="In Ref. 2; AAB70253." evidence="47" ref="2">
    <original>D</original>
    <variation>DF</variation>
    <location>
        <position position="68"/>
    </location>
</feature>
<feature type="sequence conflict" description="In Ref. 1; CAA57465." evidence="47" ref="1">
    <original>Q</original>
    <variation>P</variation>
    <location>
        <position position="224"/>
    </location>
</feature>
<feature type="sequence conflict" description="In Ref. 1; CAA57465." evidence="47" ref="1">
    <original>L</original>
    <variation>F</variation>
    <location>
        <position position="648"/>
    </location>
</feature>
<feature type="sequence conflict" description="In Ref. 1; CAA57465." evidence="47" ref="1">
    <original>E</original>
    <variation>D</variation>
    <location>
        <position position="651"/>
    </location>
</feature>
<feature type="helix" evidence="60">
    <location>
        <begin position="15"/>
        <end position="30"/>
    </location>
</feature>
<feature type="helix" evidence="60">
    <location>
        <begin position="37"/>
        <end position="53"/>
    </location>
</feature>
<feature type="strand" evidence="60">
    <location>
        <begin position="54"/>
        <end position="57"/>
    </location>
</feature>
<feature type="helix" evidence="60">
    <location>
        <begin position="58"/>
        <end position="80"/>
    </location>
</feature>
<feature type="helix" evidence="60">
    <location>
        <begin position="88"/>
        <end position="103"/>
    </location>
</feature>
<feature type="turn" evidence="60">
    <location>
        <begin position="104"/>
        <end position="108"/>
    </location>
</feature>
<feature type="turn" evidence="60">
    <location>
        <begin position="110"/>
        <end position="113"/>
    </location>
</feature>
<feature type="helix" evidence="60">
    <location>
        <begin position="114"/>
        <end position="117"/>
    </location>
</feature>
<feature type="helix" evidence="60">
    <location>
        <begin position="134"/>
        <end position="145"/>
    </location>
</feature>
<feature type="helix" evidence="60">
    <location>
        <begin position="147"/>
        <end position="166"/>
    </location>
</feature>
<feature type="turn" evidence="60">
    <location>
        <begin position="167"/>
        <end position="169"/>
    </location>
</feature>
<feature type="helix" evidence="60">
    <location>
        <begin position="175"/>
        <end position="187"/>
    </location>
</feature>
<feature type="turn" evidence="60">
    <location>
        <begin position="194"/>
        <end position="201"/>
    </location>
</feature>
<feature type="helix" evidence="60">
    <location>
        <begin position="202"/>
        <end position="215"/>
    </location>
</feature>
<feature type="helix" evidence="60">
    <location>
        <begin position="218"/>
        <end position="224"/>
    </location>
</feature>
<feature type="helix" evidence="60">
    <location>
        <begin position="227"/>
        <end position="243"/>
    </location>
</feature>
<feature type="helix" evidence="60">
    <location>
        <begin position="245"/>
        <end position="248"/>
    </location>
</feature>
<feature type="strand" evidence="57">
    <location>
        <begin position="252"/>
        <end position="254"/>
    </location>
</feature>
<feature type="helix" evidence="60">
    <location>
        <begin position="258"/>
        <end position="269"/>
    </location>
</feature>
<feature type="helix" evidence="60">
    <location>
        <begin position="271"/>
        <end position="273"/>
    </location>
</feature>
<feature type="helix" evidence="60">
    <location>
        <begin position="274"/>
        <end position="278"/>
    </location>
</feature>
<feature type="helix" evidence="60">
    <location>
        <begin position="281"/>
        <end position="286"/>
    </location>
</feature>
<feature type="helix" evidence="60">
    <location>
        <begin position="290"/>
        <end position="300"/>
    </location>
</feature>
<feature type="turn" evidence="58">
    <location>
        <begin position="304"/>
        <end position="306"/>
    </location>
</feature>
<feature type="helix" evidence="60">
    <location>
        <begin position="308"/>
        <end position="324"/>
    </location>
</feature>
<feature type="turn" evidence="60">
    <location>
        <begin position="325"/>
        <end position="331"/>
    </location>
</feature>
<feature type="helix" evidence="60">
    <location>
        <begin position="337"/>
        <end position="340"/>
    </location>
</feature>
<feature type="helix" evidence="60">
    <location>
        <begin position="343"/>
        <end position="359"/>
    </location>
</feature>
<feature type="helix" evidence="60">
    <location>
        <begin position="363"/>
        <end position="371"/>
    </location>
</feature>
<feature type="helix" evidence="60">
    <location>
        <begin position="374"/>
        <end position="376"/>
    </location>
</feature>
<feature type="helix" evidence="56">
    <location>
        <begin position="405"/>
        <end position="416"/>
    </location>
</feature>
<feature type="strand" evidence="56">
    <location>
        <begin position="417"/>
        <end position="419"/>
    </location>
</feature>
<feature type="helix" evidence="56">
    <location>
        <begin position="420"/>
        <end position="423"/>
    </location>
</feature>
<feature type="helix" evidence="56">
    <location>
        <begin position="427"/>
        <end position="438"/>
    </location>
</feature>
<feature type="helix" evidence="56">
    <location>
        <begin position="439"/>
        <end position="443"/>
    </location>
</feature>
<feature type="helix" evidence="56">
    <location>
        <begin position="447"/>
        <end position="463"/>
    </location>
</feature>
<feature type="helix" evidence="56">
    <location>
        <begin position="470"/>
        <end position="482"/>
    </location>
</feature>
<feature type="helix" evidence="56">
    <location>
        <begin position="487"/>
        <end position="513"/>
    </location>
</feature>
<feature type="helix" evidence="56">
    <location>
        <begin position="523"/>
        <end position="525"/>
    </location>
</feature>
<feature type="strand" evidence="56">
    <location>
        <begin position="526"/>
        <end position="532"/>
    </location>
</feature>
<feature type="helix" evidence="56">
    <location>
        <begin position="533"/>
        <end position="536"/>
    </location>
</feature>
<feature type="helix" evidence="56">
    <location>
        <begin position="549"/>
        <end position="552"/>
    </location>
</feature>
<feature type="helix" evidence="56">
    <location>
        <begin position="555"/>
        <end position="563"/>
    </location>
</feature>
<feature type="strand" evidence="56">
    <location>
        <begin position="566"/>
        <end position="573"/>
    </location>
</feature>
<feature type="helix" evidence="56">
    <location>
        <begin position="575"/>
        <end position="577"/>
    </location>
</feature>
<feature type="strand" evidence="56">
    <location>
        <begin position="579"/>
        <end position="585"/>
    </location>
</feature>
<feature type="strand" evidence="56">
    <location>
        <begin position="590"/>
        <end position="596"/>
    </location>
</feature>
<feature type="helix" evidence="56">
    <location>
        <begin position="597"/>
        <end position="603"/>
    </location>
</feature>
<feature type="helix" evidence="56">
    <location>
        <begin position="604"/>
        <end position="606"/>
    </location>
</feature>
<feature type="strand" evidence="59">
    <location>
        <begin position="607"/>
        <end position="609"/>
    </location>
</feature>
<feature type="helix" evidence="56">
    <location>
        <begin position="616"/>
        <end position="623"/>
    </location>
</feature>
<feature type="helix" evidence="56">
    <location>
        <begin position="627"/>
        <end position="638"/>
    </location>
</feature>
<feature type="strand" evidence="56">
    <location>
        <begin position="647"/>
        <end position="652"/>
    </location>
</feature>
<feature type="helix" evidence="56">
    <location>
        <begin position="657"/>
        <end position="659"/>
    </location>
</feature>
<feature type="strand" evidence="56">
    <location>
        <begin position="665"/>
        <end position="668"/>
    </location>
</feature>
<feature type="strand" evidence="56">
    <location>
        <begin position="674"/>
        <end position="687"/>
    </location>
</feature>
<feature type="turn" evidence="56">
    <location>
        <begin position="690"/>
        <end position="693"/>
    </location>
</feature>
<feature type="helix" evidence="56">
    <location>
        <begin position="697"/>
        <end position="723"/>
    </location>
</feature>
<feature type="strand" evidence="56">
    <location>
        <begin position="726"/>
        <end position="729"/>
    </location>
</feature>
<feature type="helix" evidence="56">
    <location>
        <begin position="731"/>
        <end position="741"/>
    </location>
</feature>
<feature type="turn" evidence="56">
    <location>
        <begin position="742"/>
        <end position="745"/>
    </location>
</feature>
<feature type="helix" evidence="56">
    <location>
        <begin position="750"/>
        <end position="762"/>
    </location>
</feature>
<feature type="strand" evidence="56">
    <location>
        <begin position="765"/>
        <end position="769"/>
    </location>
</feature>
<feature type="strand" evidence="56">
    <location>
        <begin position="772"/>
        <end position="778"/>
    </location>
</feature>
<comment type="function">
    <text evidence="1 6 8 13 16 18 21 25 27 29 32 34 35 37 39 42 44">Core component of multiple cullin-5-RING E3 ubiquitin-protein ligase complexes (ECS complexes, also named CRL5 complexes), which mediate the ubiquitination and subsequent proteasomal degradation of target proteins (PubMed:11384984, PubMed:15601820, PubMed:21199876, PubMed:21980433, PubMed:23897481, PubMed:25505247, PubMed:27910872, PubMed:32200094, PubMed:33268465, PubMed:35512830, PubMed:38418882). Acts a scaffold protein that contributes to catalysis through positioning of the substrate and the ubiquitin-conjugating enzyme (PubMed:11384984, PubMed:15601820, PubMed:33268465). The functional specificity of the E3 ubiquitin-protein ligase complex depends on the variable SOCS box-containing substrate recognition component (PubMed:11384984, PubMed:15601820, PubMed:33268465). Acts as a key regulator of neuron positioning during cortex development: component of various SOCS-containing ECS complexes, such as the ECS(SOCS7) complex, that regulate reelin signaling by mediating ubiquitination and degradation of DAB1 (By similarity). ECS(SOCS1) seems to direct ubiquitination of JAK2 (PubMed:11384984). The ECS(SOCS2) complex mediates the ubiquitination and subsequent proteasomal degradation of phosphorylated EPOR and GHR (PubMed:21980433, PubMed:25505247). The ECS(SPSB3) complex catalyzes ubiquitination of nuclear CGAS (PubMed:38418882). ECS(KLHDC1) complex is part of the DesCEND (destruction via C-end degrons) pathway and mediates ubiquitination and degradation of truncated SELENOS selenoprotein produced by failed UGA/Sec decoding, which ends with a glycine (PubMed:32200094). The ECS(ASB9) complex mediates ubiquitination and degradation of CKB (PubMed:33268465). As part of some ECS complex, promotes 'Lys-11'-linked ubiquitination and degradation of BTRC (PubMed:27910872). As part of a multisubunit ECS complex, polyubiquitinates monoubiquitinated POLR2A (PubMed:19920177). As part of the ECS(RAB40C) complex, mediates ANKRD28 ubiquitination and degradation, thereby inhibiting protein phosphatase 6 (PP6) complex activity and focal adhesion assembly during cell migration (PubMed:35512830). As part of the ECS(RAB40A) complex, mediates RHOU 'Lys-48'-linked ubiquitination and degradation, thus inhibiting focal adhesion disassembly during cell migration (PubMed:26598620). As part of the ECS(RAB40B) complex, mediates LIMA1/EPLIN and RAP2 ubiquitination, thereby regulating actin cytoskeleton dynamics and stress fiber formation during cell migration (PubMed:33999101, PubMed:35293963). May form a cell surface vasopressin receptor (PubMed:9037604).</text>
</comment>
<comment type="function">
    <text evidence="10 19 41">(Microbial infection) Following infection by HIV-1 virus, CUL5 associates with HIV-1 Vif proteins and forms a cullin-5-RING E3 ubiquitin-protein ligase complex (ECS complex) that catalyzes ubiquitination and degradation of APOBEC3F and APOBEC3G (PubMed:16636053, PubMed:22190037). The complex can also ubiquitinate APOBEC3H to some extent (PubMed:37640699).</text>
</comment>
<comment type="function">
    <text evidence="7">(Microbial infection) Seems to be involved in proteasomal degradation of p53/TP53 stimulated by adenovirus E1B-55 kDa protein.</text>
</comment>
<comment type="pathway">
    <text evidence="6 8 18 25 29 32 34 42">Protein modification; protein ubiquitination.</text>
</comment>
<comment type="subunit">
    <text evidence="1 4 6 8 9 12 13 15 18 20 21 22 23 25 27 28 29 30 31 32 33 34 35 36 37 38 39 42 43">Component of multiple cullin-5-RING E3 ubiquitin-protein ligase complexes (ECS complexes, also named CRL5 complexes) formed of CUL5, Elongin BC (ELOB and ELOC), RNF7/RBX2 and a variable SOCS box domain-containing protein as substrate-specific recognition component (PubMed:11384984, PubMed:15601820, PubMed:16325183, PubMed:21119685, PubMed:27910872, PubMed:32513959, PubMed:33268465, PubMed:35512830, PubMed:26598620, PubMed:33999101, PubMed:35293963). CUL5-containing ECS complexes specifically contain RNF7/RBX2, and not RBX1, as catalytic subunit (PubMed:11384984, PubMed:15601820, PubMed:32513959, PubMed:33268465). Component of the ECS(ASB2) complex with the substrate recognition component ASB2 (PubMed:16325183, PubMed:21119685). Component of the ECS(ASB6) complex with the substrate recognition component ASB6 (PubMed:16325183). Component of the ECS(ASB7) complex with the substrate recognition component ASB7 (PubMed:16325183). Component of the ECS(ASB9) complex with the substrate recognition component ASB9 (PubMed:33268465). Component of the ECS(ASB11) complex with the substrate recognition component ASB11 (PubMed:24337577, PubMed:31387940, PubMed:38574733). Component of the ECS(ASB12) complex with the substrate recognition component ASB12 (PubMed:16325183). Component of the ECS(LRRC41) complex with the substrate recognition component LRRC41 (PubMed:11384984). Component of the ECS(SOCS1) complex with the substrate recognition component SOCS1 (PubMed:11384984). Component of the ECS(SOCS2) complex with the substrate recognition component SOCS2 (PubMed:21980433, PubMed:23897481, PubMed:25505247). Component of the ECS(WSB1) complex with the substrate recognition subunit WSB1 (PubMed:15601820). Component of the ECS(SOCS3) complex with the substrate recognition component SOCS3 (PubMed:15601820). Component of the ECS(SOCS7) complex with the substrate recognition component SOCS7 (By similarity). Component of the ECS(SPSB1) complex with the substrate recognition component SPSB1 (PubMed:15601820). Component of the ECS(SPSB3) complex with the substrate recognition component SPSB3 (PubMed:38418882). Component of the ECS(SPSB2) complex with the substrate recognition component SPSB2 (PubMed:15601820). Component of the ECS(SPSB4) complex with the substrate recognition component SPSB4 (PubMed:15601820). Component of the ECS(RAB40) complex with the substrate recognition subunit RAB40A, RAB40B or RAB40C (PubMed:15601820, PubMed:35512830, PubMed:26598620, PubMed:33999101, PubMed:35293963). Component of the ECS(KLHDC1) complex with the substrate recognition component KLHDC1 (PubMed:32200094). Component of the ECS(PCMTD1) complex with the substrate recognition subunit PCMTD1 (PubMed:35486881). May also form complexes containing RBX1 and ELOA or VHL; additional evidence is however required to confirm this result in vivo (PubMed:10230407, PubMed:11384984, PubMed:18805092, PubMed:19920177). Interacts (when neddylated) with ARIH2; leading to activate the E3 ligase activity of ARIH2 (PubMed:24076655, PubMed:33268465, PubMed:34518685). Interacts with ERCC6; the interaction is induced by DNA damaging agents or inhibitors of RNA polymerase II elongation (PubMed:28292928). Interacts with ELOA (via the BC-box) (PubMed:28292928). Interacts (unneddylated form) with DCUN1D1, DCUN1D2, DCUN1D3, DCUN1D4 and DCUN1D5; these interactions promote the cullin neddylation (PubMed:23201271, PubMed:26906416).</text>
</comment>
<comment type="subunit">
    <text evidence="7 10 11 14 19 24 41">(Microbial infection) Interacts (via the substrate recognition component) with HIV-1 Vif; forming an active cullin-5-RING E3 ubiquitin-protein ligase complex (ECS complex).</text>
</comment>
<comment type="subunit">
    <text evidence="7">(Microbial infection) Interacts (via the substrate recognition component) with human adenovirus 5 proteins E1B-55K and E4-orf6.</text>
</comment>
<comment type="subunit">
    <text evidence="17">(Microbial infection) Interacts with herpes virus 8 protein LANA1; this interaction promotes the degradation of NF-kappa-B component RELA.</text>
</comment>
<comment type="subunit">
    <text evidence="26">(Microbial infection) Interacts with molluscum contagiosum virus protein MC132; this interaction promotes the degradation of NF-kappa-B component RELA.</text>
</comment>
<comment type="interaction">
    <interactant intactId="EBI-1057139">
        <id>Q93034</id>
    </interactant>
    <interactant intactId="EBI-711158">
        <id>O95376</id>
        <label>ARIH2</label>
    </interactant>
    <organismsDiffer>false</organismsDiffer>
    <experiments>13</experiments>
</comment>
<comment type="interaction">
    <interactant intactId="EBI-1057139">
        <id>Q93034</id>
    </interactant>
    <interactant intactId="EBI-2323092">
        <id>Q9Y576</id>
        <label>ASB1</label>
    </interactant>
    <organismsDiffer>false</organismsDiffer>
    <experiments>8</experiments>
</comment>
<comment type="interaction">
    <interactant intactId="EBI-1057139">
        <id>Q93034</id>
    </interactant>
    <interactant intactId="EBI-28950233">
        <id>Q96Q27-2</id>
        <label>ASB2</label>
    </interactant>
    <organismsDiffer>false</organismsDiffer>
    <experiments>3</experiments>
</comment>
<comment type="interaction">
    <interactant intactId="EBI-1057139">
        <id>Q93034</id>
    </interactant>
    <interactant intactId="EBI-6425205">
        <id>Q9NWX5</id>
        <label>ASB6</label>
    </interactant>
    <organismsDiffer>false</organismsDiffer>
    <experiments>11</experiments>
</comment>
<comment type="interaction">
    <interactant intactId="EBI-1057139">
        <id>Q93034</id>
    </interactant>
    <interactant intactId="EBI-3916346">
        <id>Q9H672</id>
        <label>ASB7</label>
    </interactant>
    <organismsDiffer>false</organismsDiffer>
    <experiments>5</experiments>
</comment>
<comment type="interaction">
    <interactant intactId="EBI-1057139">
        <id>Q93034</id>
    </interactant>
    <interactant intactId="EBI-745269">
        <id>Q9NPC3</id>
        <label>CCNB1IP1</label>
    </interactant>
    <organismsDiffer>false</organismsDiffer>
    <experiments>3</experiments>
</comment>
<comment type="interaction">
    <interactant intactId="EBI-1057139">
        <id>Q93034</id>
    </interactant>
    <interactant intactId="EBI-748961">
        <id>O95273</id>
        <label>CCNDBP1</label>
    </interactant>
    <organismsDiffer>false</organismsDiffer>
    <experiments>4</experiments>
</comment>
<comment type="interaction">
    <interactant intactId="EBI-1057139">
        <id>Q93034</id>
    </interactant>
    <interactant intactId="EBI-3866319">
        <id>Q9Y2V7</id>
        <label>COG6</label>
    </interactant>
    <organismsDiffer>false</organismsDiffer>
    <experiments>3</experiments>
</comment>
<comment type="interaction">
    <interactant intactId="EBI-1057139">
        <id>Q93034</id>
    </interactant>
    <interactant intactId="EBI-641062">
        <id>P04626</id>
        <label>ERBB2</label>
    </interactant>
    <organismsDiffer>false</organismsDiffer>
    <experiments>2</experiments>
</comment>
<comment type="interaction">
    <interactant intactId="EBI-1057139">
        <id>Q93034</id>
    </interactant>
    <interactant intactId="EBI-618309">
        <id>Q08379</id>
        <label>GOLGA2</label>
    </interactant>
    <organismsDiffer>false</organismsDiffer>
    <experiments>3</experiments>
</comment>
<comment type="interaction">
    <interactant intactId="EBI-1057139">
        <id>Q93034</id>
    </interactant>
    <interactant intactId="EBI-466029">
        <id>P42858</id>
        <label>HTT</label>
    </interactant>
    <organismsDiffer>false</organismsDiffer>
    <experiments>10</experiments>
</comment>
<comment type="interaction">
    <interactant intactId="EBI-1057139">
        <id>Q93034</id>
    </interactant>
    <interactant intactId="EBI-9355810">
        <id>Q5T7N3</id>
        <label>KANK4</label>
    </interactant>
    <organismsDiffer>false</organismsDiffer>
    <experiments>3</experiments>
</comment>
<comment type="interaction">
    <interactant intactId="EBI-1057139">
        <id>Q93034</id>
    </interactant>
    <interactant intactId="EBI-398523">
        <id>P62877</id>
        <label>RBX1</label>
    </interactant>
    <organismsDiffer>false</organismsDiffer>
    <experiments>3</experiments>
</comment>
<comment type="interaction">
    <interactant intactId="EBI-1057139">
        <id>Q93034</id>
    </interactant>
    <interactant intactId="EBI-398632">
        <id>Q9UBF6</id>
        <label>RNF7</label>
    </interactant>
    <organismsDiffer>false</organismsDiffer>
    <experiments>11</experiments>
</comment>
<comment type="interaction">
    <interactant intactId="EBI-1057139">
        <id>Q93034</id>
    </interactant>
    <interactant intactId="EBI-617737">
        <id>O14508</id>
        <label>SOCS2</label>
    </interactant>
    <organismsDiffer>false</organismsDiffer>
    <experiments>11</experiments>
</comment>
<comment type="interaction">
    <interactant intactId="EBI-1057139">
        <id>Q93034</id>
    </interactant>
    <interactant intactId="EBI-6933128">
        <id>O41974</id>
        <label>GAMMAHV.ORF73</label>
    </interactant>
    <organismsDiffer>true</organismsDiffer>
    <experiments>2</experiments>
</comment>
<comment type="interaction">
    <interactant intactId="EBI-1057139">
        <id>Q93034</id>
    </interactant>
    <interactant intactId="EBI-779991">
        <id>P12504</id>
        <label>vif</label>
    </interactant>
    <organismsDiffer>true</organismsDiffer>
    <experiments>11</experiments>
</comment>
<comment type="subcellular location">
    <subcellularLocation>
        <location evidence="40 42">Nucleus</location>
    </subcellularLocation>
    <text evidence="40">Localizes to sites of DNA damage in a UBAP2 and UBAP2L-dependent manner.</text>
</comment>
<comment type="PTM">
    <text evidence="5 7 12 22">Neddylated; which enhances the ubiquitination activity of ECS complexes and prevents binding of the inhibitor CAND1. Deneddylated via its interaction with the COP9 signalosome (CSN).</text>
</comment>
<comment type="similarity">
    <text evidence="3">Belongs to the cullin family.</text>
</comment>
<gene>
    <name evidence="45 48" type="primary">CUL5</name>
    <name evidence="46" type="synonym">VACM1</name>
</gene>
<name>CUL5_HUMAN</name>